<reference key="1">
    <citation type="journal article" date="1998" name="Proc. Natl. Acad. Sci. U.S.A.">
        <title>Complete mitochondrial genome suggests diapsid affinities of turtles.</title>
        <authorList>
            <person name="Zardoya R."/>
            <person name="Meyer A."/>
        </authorList>
    </citation>
    <scope>NUCLEOTIDE SEQUENCE [GENOMIC DNA]</scope>
</reference>
<organism>
    <name type="scientific">Pelomedusa subrufa</name>
    <name type="common">African side-necked turtle</name>
    <dbReference type="NCBI Taxonomy" id="44522"/>
    <lineage>
        <taxon>Eukaryota</taxon>
        <taxon>Metazoa</taxon>
        <taxon>Chordata</taxon>
        <taxon>Craniata</taxon>
        <taxon>Vertebrata</taxon>
        <taxon>Euteleostomi</taxon>
        <taxon>Archelosauria</taxon>
        <taxon>Testudinata</taxon>
        <taxon>Testudines</taxon>
        <taxon>Pleurodira</taxon>
        <taxon>Pelomedusidae</taxon>
        <taxon>Pelomedusa</taxon>
    </lineage>
</organism>
<gene>
    <name type="primary">MT-ND6</name>
    <name type="synonym">MTND6</name>
    <name type="synonym">NADH6</name>
    <name type="synonym">ND6</name>
</gene>
<sequence>MYVSMLFGFSYVFWLIGVSSNISVYYGVVSLVCTAGTGCVVLAWKGGSFLALVLFLIYLGGMLVIFAYSITLVMEPFPEVMGDWVGVMHAGKYVVLAVVFVLVGWGWWGVGECGDGVVDAGGLSIVRVDSSGLSLLYAIGGGALMMAMFGLFLTFFIVLVLVQGLFRVACPTI</sequence>
<feature type="chain" id="PRO_0000118313" description="NADH-ubiquinone oxidoreductase chain 6">
    <location>
        <begin position="1"/>
        <end position="173"/>
    </location>
</feature>
<feature type="transmembrane region" description="Helical" evidence="2">
    <location>
        <begin position="12"/>
        <end position="32"/>
    </location>
</feature>
<feature type="transmembrane region" description="Helical" evidence="2">
    <location>
        <begin position="47"/>
        <end position="67"/>
    </location>
</feature>
<feature type="transmembrane region" description="Helical" evidence="2">
    <location>
        <begin position="94"/>
        <end position="114"/>
    </location>
</feature>
<feature type="transmembrane region" description="Helical" evidence="2">
    <location>
        <begin position="142"/>
        <end position="162"/>
    </location>
</feature>
<proteinExistence type="inferred from homology"/>
<keyword id="KW-0249">Electron transport</keyword>
<keyword id="KW-0472">Membrane</keyword>
<keyword id="KW-0496">Mitochondrion</keyword>
<keyword id="KW-0520">NAD</keyword>
<keyword id="KW-0679">Respiratory chain</keyword>
<keyword id="KW-1278">Translocase</keyword>
<keyword id="KW-0812">Transmembrane</keyword>
<keyword id="KW-1133">Transmembrane helix</keyword>
<keyword id="KW-0813">Transport</keyword>
<keyword id="KW-0830">Ubiquinone</keyword>
<accession>O79679</accession>
<name>NU6M_PELSU</name>
<dbReference type="EC" id="7.1.1.2"/>
<dbReference type="EMBL" id="AF039066">
    <property type="protein sequence ID" value="AAD05059.1"/>
    <property type="molecule type" value="Genomic_DNA"/>
</dbReference>
<dbReference type="PIR" id="T11112">
    <property type="entry name" value="T11112"/>
</dbReference>
<dbReference type="RefSeq" id="NP_008443.1">
    <property type="nucleotide sequence ID" value="NC_001947.1"/>
</dbReference>
<dbReference type="SMR" id="O79679"/>
<dbReference type="GeneID" id="808285"/>
<dbReference type="CTD" id="4541"/>
<dbReference type="GO" id="GO:0031966">
    <property type="term" value="C:mitochondrial membrane"/>
    <property type="evidence" value="ECO:0007669"/>
    <property type="project" value="UniProtKB-SubCell"/>
</dbReference>
<dbReference type="GO" id="GO:0008137">
    <property type="term" value="F:NADH dehydrogenase (ubiquinone) activity"/>
    <property type="evidence" value="ECO:0007669"/>
    <property type="project" value="UniProtKB-EC"/>
</dbReference>
<dbReference type="InterPro" id="IPR050269">
    <property type="entry name" value="ComplexI_Subunit6"/>
</dbReference>
<dbReference type="InterPro" id="IPR001457">
    <property type="entry name" value="NADH_UbQ/plastoQ_OxRdtase_su6"/>
</dbReference>
<dbReference type="PANTHER" id="PTHR11435">
    <property type="entry name" value="NADH UBIQUINONE OXIDOREDUCTASE SUBUNIT ND6"/>
    <property type="match status" value="1"/>
</dbReference>
<dbReference type="PANTHER" id="PTHR11435:SF1">
    <property type="entry name" value="NADH-UBIQUINONE OXIDOREDUCTASE CHAIN 6"/>
    <property type="match status" value="1"/>
</dbReference>
<dbReference type="Pfam" id="PF00499">
    <property type="entry name" value="Oxidored_q3"/>
    <property type="match status" value="1"/>
</dbReference>
<evidence type="ECO:0000250" key="1"/>
<evidence type="ECO:0000255" key="2"/>
<evidence type="ECO:0000305" key="3"/>
<geneLocation type="mitochondrion"/>
<comment type="function">
    <text evidence="1">Core subunit of the mitochondrial membrane respiratory chain NADH dehydrogenase (Complex I) that is believed to belong to the minimal assembly required for catalysis. Complex I functions in the transfer of electrons from NADH to the respiratory chain. The immediate electron acceptor for the enzyme is believed to be ubiquinone (By similarity).</text>
</comment>
<comment type="catalytic activity">
    <reaction>
        <text>a ubiquinone + NADH + 5 H(+)(in) = a ubiquinol + NAD(+) + 4 H(+)(out)</text>
        <dbReference type="Rhea" id="RHEA:29091"/>
        <dbReference type="Rhea" id="RHEA-COMP:9565"/>
        <dbReference type="Rhea" id="RHEA-COMP:9566"/>
        <dbReference type="ChEBI" id="CHEBI:15378"/>
        <dbReference type="ChEBI" id="CHEBI:16389"/>
        <dbReference type="ChEBI" id="CHEBI:17976"/>
        <dbReference type="ChEBI" id="CHEBI:57540"/>
        <dbReference type="ChEBI" id="CHEBI:57945"/>
        <dbReference type="EC" id="7.1.1.2"/>
    </reaction>
</comment>
<comment type="subcellular location">
    <subcellularLocation>
        <location evidence="3">Mitochondrion membrane</location>
        <topology evidence="3">Multi-pass membrane protein</topology>
    </subcellularLocation>
</comment>
<comment type="similarity">
    <text evidence="3">Belongs to the complex I subunit 6 family.</text>
</comment>
<protein>
    <recommendedName>
        <fullName>NADH-ubiquinone oxidoreductase chain 6</fullName>
        <ecNumber>7.1.1.2</ecNumber>
    </recommendedName>
    <alternativeName>
        <fullName>NADH dehydrogenase subunit 6</fullName>
    </alternativeName>
</protein>